<sequence>MSVRLGIVMDPIARINFKKDSSLAMLLAAQARGWSLFYMEQQDLYQKAGVARGRMRPLKVFNDASRWFELEAESDQPLHELDVILMRKDPPFDNEFVYSTYLLEQAERAGALVVNRPQSLRDCNEKFFATQFTQCTPPTMVSRRSDILREFAAEHRDIILKPLDGMGGSSIFRHREGDPNLSVILETLTQHGSQQIMAQRYLPEIKDGDKRILMIDGEPVPYCLARIPAQGETRGNLAAGGRGVAQPLSERDRWIAAEVGPHLRERGLLFVGLDVIGDYLTEINVTSPTCIREIDQAFDTRIGDKLMDAIAAQLAAR</sequence>
<evidence type="ECO:0000250" key="1"/>
<evidence type="ECO:0000255" key="2">
    <source>
        <dbReference type="HAMAP-Rule" id="MF_00162"/>
    </source>
</evidence>
<proteinExistence type="inferred from homology"/>
<name>GSHB_PSEAE</name>
<protein>
    <recommendedName>
        <fullName evidence="2">Glutathione synthetase</fullName>
        <ecNumber evidence="2">6.3.2.3</ecNumber>
    </recommendedName>
    <alternativeName>
        <fullName evidence="2">GSH synthetase</fullName>
        <shortName evidence="2">GSH-S</shortName>
        <shortName evidence="2">GSHase</shortName>
    </alternativeName>
    <alternativeName>
        <fullName evidence="2">Glutathione synthase</fullName>
    </alternativeName>
</protein>
<reference key="1">
    <citation type="journal article" date="2000" name="Nature">
        <title>Complete genome sequence of Pseudomonas aeruginosa PAO1, an opportunistic pathogen.</title>
        <authorList>
            <person name="Stover C.K."/>
            <person name="Pham X.-Q.T."/>
            <person name="Erwin A.L."/>
            <person name="Mizoguchi S.D."/>
            <person name="Warrener P."/>
            <person name="Hickey M.J."/>
            <person name="Brinkman F.S.L."/>
            <person name="Hufnagle W.O."/>
            <person name="Kowalik D.J."/>
            <person name="Lagrou M."/>
            <person name="Garber R.L."/>
            <person name="Goltry L."/>
            <person name="Tolentino E."/>
            <person name="Westbrock-Wadman S."/>
            <person name="Yuan Y."/>
            <person name="Brody L.L."/>
            <person name="Coulter S.N."/>
            <person name="Folger K.R."/>
            <person name="Kas A."/>
            <person name="Larbig K."/>
            <person name="Lim R.M."/>
            <person name="Smith K.A."/>
            <person name="Spencer D.H."/>
            <person name="Wong G.K.-S."/>
            <person name="Wu Z."/>
            <person name="Paulsen I.T."/>
            <person name="Reizer J."/>
            <person name="Saier M.H. Jr."/>
            <person name="Hancock R.E.W."/>
            <person name="Lory S."/>
            <person name="Olson M.V."/>
        </authorList>
    </citation>
    <scope>NUCLEOTIDE SEQUENCE [LARGE SCALE GENOMIC DNA]</scope>
    <source>
        <strain>ATCC 15692 / DSM 22644 / CIP 104116 / JCM 14847 / LMG 12228 / 1C / PRS 101 / PAO1</strain>
    </source>
</reference>
<feature type="chain" id="PRO_0000197476" description="Glutathione synthetase">
    <location>
        <begin position="1"/>
        <end position="317"/>
    </location>
</feature>
<feature type="domain" description="ATP-grasp" evidence="2">
    <location>
        <begin position="126"/>
        <end position="311"/>
    </location>
</feature>
<feature type="binding site" evidence="2">
    <location>
        <begin position="152"/>
        <end position="208"/>
    </location>
    <ligand>
        <name>ATP</name>
        <dbReference type="ChEBI" id="CHEBI:30616"/>
    </ligand>
</feature>
<feature type="binding site" evidence="2">
    <location>
        <position position="282"/>
    </location>
    <ligand>
        <name>Mg(2+)</name>
        <dbReference type="ChEBI" id="CHEBI:18420"/>
    </ligand>
</feature>
<feature type="binding site" evidence="2">
    <location>
        <position position="284"/>
    </location>
    <ligand>
        <name>Mg(2+)</name>
        <dbReference type="ChEBI" id="CHEBI:18420"/>
    </ligand>
</feature>
<keyword id="KW-0067">ATP-binding</keyword>
<keyword id="KW-0317">Glutathione biosynthesis</keyword>
<keyword id="KW-0436">Ligase</keyword>
<keyword id="KW-0460">Magnesium</keyword>
<keyword id="KW-0464">Manganese</keyword>
<keyword id="KW-0479">Metal-binding</keyword>
<keyword id="KW-0547">Nucleotide-binding</keyword>
<keyword id="KW-1185">Reference proteome</keyword>
<comment type="catalytic activity">
    <reaction evidence="2">
        <text>gamma-L-glutamyl-L-cysteine + glycine + ATP = glutathione + ADP + phosphate + H(+)</text>
        <dbReference type="Rhea" id="RHEA:13557"/>
        <dbReference type="ChEBI" id="CHEBI:15378"/>
        <dbReference type="ChEBI" id="CHEBI:30616"/>
        <dbReference type="ChEBI" id="CHEBI:43474"/>
        <dbReference type="ChEBI" id="CHEBI:57305"/>
        <dbReference type="ChEBI" id="CHEBI:57925"/>
        <dbReference type="ChEBI" id="CHEBI:58173"/>
        <dbReference type="ChEBI" id="CHEBI:456216"/>
        <dbReference type="EC" id="6.3.2.3"/>
    </reaction>
</comment>
<comment type="cofactor">
    <cofactor evidence="1">
        <name>Mg(2+)</name>
        <dbReference type="ChEBI" id="CHEBI:18420"/>
    </cofactor>
    <cofactor evidence="1">
        <name>Mn(2+)</name>
        <dbReference type="ChEBI" id="CHEBI:29035"/>
    </cofactor>
    <text evidence="1">Binds 1 Mg(2+) or Mn(2+) ion per subunit.</text>
</comment>
<comment type="pathway">
    <text evidence="2">Sulfur metabolism; glutathione biosynthesis; glutathione from L-cysteine and L-glutamate: step 2/2.</text>
</comment>
<comment type="similarity">
    <text evidence="2">Belongs to the prokaryotic GSH synthase family.</text>
</comment>
<accession>Q9I697</accession>
<gene>
    <name evidence="2" type="primary">gshB</name>
    <name type="ordered locus">PA0407</name>
</gene>
<dbReference type="EC" id="6.3.2.3" evidence="2"/>
<dbReference type="EMBL" id="AE004091">
    <property type="protein sequence ID" value="AAG03796.1"/>
    <property type="molecule type" value="Genomic_DNA"/>
</dbReference>
<dbReference type="PIR" id="G83593">
    <property type="entry name" value="G83593"/>
</dbReference>
<dbReference type="RefSeq" id="NP_249098.1">
    <property type="nucleotide sequence ID" value="NC_002516.2"/>
</dbReference>
<dbReference type="RefSeq" id="WP_003100943.1">
    <property type="nucleotide sequence ID" value="NZ_QZGE01000016.1"/>
</dbReference>
<dbReference type="SMR" id="Q9I697"/>
<dbReference type="FunCoup" id="Q9I697">
    <property type="interactions" value="342"/>
</dbReference>
<dbReference type="STRING" id="208964.PA0407"/>
<dbReference type="PaxDb" id="208964-PA0407"/>
<dbReference type="GeneID" id="878223"/>
<dbReference type="KEGG" id="pae:PA0407"/>
<dbReference type="PATRIC" id="fig|208964.12.peg.428"/>
<dbReference type="PseudoCAP" id="PA0407"/>
<dbReference type="HOGENOM" id="CLU_068239_0_0_6"/>
<dbReference type="InParanoid" id="Q9I697"/>
<dbReference type="OrthoDB" id="9785415at2"/>
<dbReference type="PhylomeDB" id="Q9I697"/>
<dbReference type="BioCyc" id="PAER208964:G1FZ6-411-MONOMER"/>
<dbReference type="UniPathway" id="UPA00142">
    <property type="reaction ID" value="UER00210"/>
</dbReference>
<dbReference type="PHI-base" id="PHI:9281"/>
<dbReference type="Proteomes" id="UP000002438">
    <property type="component" value="Chromosome"/>
</dbReference>
<dbReference type="GO" id="GO:0005737">
    <property type="term" value="C:cytoplasm"/>
    <property type="evidence" value="ECO:0000318"/>
    <property type="project" value="GO_Central"/>
</dbReference>
<dbReference type="GO" id="GO:0005524">
    <property type="term" value="F:ATP binding"/>
    <property type="evidence" value="ECO:0007669"/>
    <property type="project" value="UniProtKB-UniRule"/>
</dbReference>
<dbReference type="GO" id="GO:0004363">
    <property type="term" value="F:glutathione synthase activity"/>
    <property type="evidence" value="ECO:0000318"/>
    <property type="project" value="GO_Central"/>
</dbReference>
<dbReference type="GO" id="GO:0046872">
    <property type="term" value="F:metal ion binding"/>
    <property type="evidence" value="ECO:0007669"/>
    <property type="project" value="UniProtKB-KW"/>
</dbReference>
<dbReference type="FunFam" id="3.30.1490.20:FF:000009">
    <property type="entry name" value="Glutathione synthetase"/>
    <property type="match status" value="1"/>
</dbReference>
<dbReference type="FunFam" id="3.30.470.20:FF:000010">
    <property type="entry name" value="Glutathione synthetase"/>
    <property type="match status" value="1"/>
</dbReference>
<dbReference type="FunFam" id="3.40.50.20:FF:000009">
    <property type="entry name" value="Glutathione synthetase"/>
    <property type="match status" value="1"/>
</dbReference>
<dbReference type="Gene3D" id="3.40.50.20">
    <property type="match status" value="1"/>
</dbReference>
<dbReference type="Gene3D" id="3.30.1490.20">
    <property type="entry name" value="ATP-grasp fold, A domain"/>
    <property type="match status" value="1"/>
</dbReference>
<dbReference type="Gene3D" id="3.30.470.20">
    <property type="entry name" value="ATP-grasp fold, B domain"/>
    <property type="match status" value="1"/>
</dbReference>
<dbReference type="HAMAP" id="MF_00162">
    <property type="entry name" value="GSH_S"/>
    <property type="match status" value="1"/>
</dbReference>
<dbReference type="InterPro" id="IPR011761">
    <property type="entry name" value="ATP-grasp"/>
</dbReference>
<dbReference type="InterPro" id="IPR013815">
    <property type="entry name" value="ATP_grasp_subdomain_1"/>
</dbReference>
<dbReference type="InterPro" id="IPR006284">
    <property type="entry name" value="Glut_synth_pro"/>
</dbReference>
<dbReference type="InterPro" id="IPR004218">
    <property type="entry name" value="GSHS_ATP-bd"/>
</dbReference>
<dbReference type="InterPro" id="IPR004215">
    <property type="entry name" value="GSHS_N"/>
</dbReference>
<dbReference type="InterPro" id="IPR016185">
    <property type="entry name" value="PreATP-grasp_dom_sf"/>
</dbReference>
<dbReference type="NCBIfam" id="TIGR01380">
    <property type="entry name" value="glut_syn"/>
    <property type="match status" value="1"/>
</dbReference>
<dbReference type="NCBIfam" id="NF003573">
    <property type="entry name" value="PRK05246.1"/>
    <property type="match status" value="1"/>
</dbReference>
<dbReference type="PANTHER" id="PTHR21621:SF4">
    <property type="entry name" value="GLUTATHIONE SYNTHETASE"/>
    <property type="match status" value="1"/>
</dbReference>
<dbReference type="PANTHER" id="PTHR21621">
    <property type="entry name" value="RIBOSOMAL PROTEIN S6 MODIFICATION PROTEIN"/>
    <property type="match status" value="1"/>
</dbReference>
<dbReference type="Pfam" id="PF02955">
    <property type="entry name" value="GSH-S_ATP"/>
    <property type="match status" value="1"/>
</dbReference>
<dbReference type="Pfam" id="PF02951">
    <property type="entry name" value="GSH-S_N"/>
    <property type="match status" value="1"/>
</dbReference>
<dbReference type="SUPFAM" id="SSF56059">
    <property type="entry name" value="Glutathione synthetase ATP-binding domain-like"/>
    <property type="match status" value="1"/>
</dbReference>
<dbReference type="SUPFAM" id="SSF52440">
    <property type="entry name" value="PreATP-grasp domain"/>
    <property type="match status" value="1"/>
</dbReference>
<dbReference type="PROSITE" id="PS50975">
    <property type="entry name" value="ATP_GRASP"/>
    <property type="match status" value="1"/>
</dbReference>
<organism>
    <name type="scientific">Pseudomonas aeruginosa (strain ATCC 15692 / DSM 22644 / CIP 104116 / JCM 14847 / LMG 12228 / 1C / PRS 101 / PAO1)</name>
    <dbReference type="NCBI Taxonomy" id="208964"/>
    <lineage>
        <taxon>Bacteria</taxon>
        <taxon>Pseudomonadati</taxon>
        <taxon>Pseudomonadota</taxon>
        <taxon>Gammaproteobacteria</taxon>
        <taxon>Pseudomonadales</taxon>
        <taxon>Pseudomonadaceae</taxon>
        <taxon>Pseudomonas</taxon>
    </lineage>
</organism>